<geneLocation type="chloroplast"/>
<organism>
    <name type="scientific">Pyropia yezoensis</name>
    <name type="common">Susabi-nori</name>
    <name type="synonym">Porphyra yezoensis</name>
    <dbReference type="NCBI Taxonomy" id="2788"/>
    <lineage>
        <taxon>Eukaryota</taxon>
        <taxon>Rhodophyta</taxon>
        <taxon>Bangiophyceae</taxon>
        <taxon>Bangiales</taxon>
        <taxon>Bangiaceae</taxon>
        <taxon>Pyropia</taxon>
    </lineage>
</organism>
<evidence type="ECO:0000255" key="1">
    <source>
        <dbReference type="HAMAP-Rule" id="MF_01398"/>
    </source>
</evidence>
<sequence>MNNIVKIPQIITILSEHSSEHKFGFNSDIFEANVINILLLLFGLIYVLKQFLGSSLNARQIKVLAAIQESEERLEQASARLSESEKQLAQTQIIIDQIKKEAQLTAGKVRSSILAQGQLDIERLAITGKSNIETAEKQIRRQIQQQITFLALKRVTLQLENQMSSEMQLRIIDNNIAKLGDQL</sequence>
<accession>Q1XDP3</accession>
<gene>
    <name evidence="1" type="primary">atpF</name>
</gene>
<proteinExistence type="inferred from homology"/>
<dbReference type="EMBL" id="AP006715">
    <property type="protein sequence ID" value="BAE92368.1"/>
    <property type="molecule type" value="Genomic_DNA"/>
</dbReference>
<dbReference type="RefSeq" id="YP_536925.1">
    <property type="nucleotide sequence ID" value="NC_007932.1"/>
</dbReference>
<dbReference type="SMR" id="Q1XDP3"/>
<dbReference type="GeneID" id="3978837"/>
<dbReference type="GO" id="GO:0009535">
    <property type="term" value="C:chloroplast thylakoid membrane"/>
    <property type="evidence" value="ECO:0007669"/>
    <property type="project" value="UniProtKB-SubCell"/>
</dbReference>
<dbReference type="GO" id="GO:0045259">
    <property type="term" value="C:proton-transporting ATP synthase complex"/>
    <property type="evidence" value="ECO:0007669"/>
    <property type="project" value="UniProtKB-KW"/>
</dbReference>
<dbReference type="GO" id="GO:0005524">
    <property type="term" value="F:ATP binding"/>
    <property type="evidence" value="ECO:0007669"/>
    <property type="project" value="UniProtKB-KW"/>
</dbReference>
<dbReference type="GO" id="GO:0046933">
    <property type="term" value="F:proton-transporting ATP synthase activity, rotational mechanism"/>
    <property type="evidence" value="ECO:0007669"/>
    <property type="project" value="UniProtKB-UniRule"/>
</dbReference>
<dbReference type="CDD" id="cd06503">
    <property type="entry name" value="ATP-synt_Fo_b"/>
    <property type="match status" value="1"/>
</dbReference>
<dbReference type="HAMAP" id="MF_01398">
    <property type="entry name" value="ATP_synth_b_bprime"/>
    <property type="match status" value="1"/>
</dbReference>
<dbReference type="InterPro" id="IPR002146">
    <property type="entry name" value="ATP_synth_b/b'su_bac/chlpt"/>
</dbReference>
<dbReference type="PANTHER" id="PTHR34264">
    <property type="entry name" value="ATP SYNTHASE SUBUNIT B, CHLOROPLASTIC"/>
    <property type="match status" value="1"/>
</dbReference>
<dbReference type="PANTHER" id="PTHR34264:SF3">
    <property type="entry name" value="ATP SYNTHASE SUBUNIT B, CHLOROPLASTIC"/>
    <property type="match status" value="1"/>
</dbReference>
<dbReference type="Pfam" id="PF00430">
    <property type="entry name" value="ATP-synt_B"/>
    <property type="match status" value="1"/>
</dbReference>
<protein>
    <recommendedName>
        <fullName evidence="1">ATP synthase subunit b, chloroplastic</fullName>
    </recommendedName>
    <alternativeName>
        <fullName evidence="1">ATP synthase F(0) sector subunit b</fullName>
    </alternativeName>
    <alternativeName>
        <fullName evidence="1">ATPase subunit I</fullName>
    </alternativeName>
</protein>
<name>ATPF_PYRYE</name>
<comment type="function">
    <text evidence="1">F(1)F(0) ATP synthase produces ATP from ADP in the presence of a proton or sodium gradient. F-type ATPases consist of two structural domains, F(1) containing the extramembraneous catalytic core and F(0) containing the membrane proton channel, linked together by a central stalk and a peripheral stalk. During catalysis, ATP synthesis in the catalytic domain of F(1) is coupled via a rotary mechanism of the central stalk subunits to proton translocation.</text>
</comment>
<comment type="function">
    <text evidence="1">Component of the F(0) channel, it forms part of the peripheral stalk, linking F(1) to F(0).</text>
</comment>
<comment type="subunit">
    <text evidence="1">F-type ATPases have 2 components, F(1) - the catalytic core - and F(0) - the membrane proton channel. F(1) has five subunits: alpha(3), beta(3), gamma(1), delta(1), epsilon(1). F(0) has four main subunits: a(1), b(1), b'(1) and c(10-14). The alpha and beta chains form an alternating ring which encloses part of the gamma chain. F(1) is attached to F(0) by a central stalk formed by the gamma and epsilon chains, while a peripheral stalk is formed by the delta, b and b' chains.</text>
</comment>
<comment type="subcellular location">
    <subcellularLocation>
        <location evidence="1">Plastid</location>
        <location evidence="1">Chloroplast thylakoid membrane</location>
        <topology evidence="1">Single-pass membrane protein</topology>
    </subcellularLocation>
</comment>
<comment type="miscellaneous">
    <text>In plastids the F-type ATPase is also known as CF(1)CF(0).</text>
</comment>
<comment type="similarity">
    <text evidence="1">Belongs to the ATPase B chain family.</text>
</comment>
<keyword id="KW-0066">ATP synthesis</keyword>
<keyword id="KW-0067">ATP-binding</keyword>
<keyword id="KW-0138">CF(0)</keyword>
<keyword id="KW-0150">Chloroplast</keyword>
<keyword id="KW-0375">Hydrogen ion transport</keyword>
<keyword id="KW-0406">Ion transport</keyword>
<keyword id="KW-0472">Membrane</keyword>
<keyword id="KW-0547">Nucleotide-binding</keyword>
<keyword id="KW-0934">Plastid</keyword>
<keyword id="KW-0793">Thylakoid</keyword>
<keyword id="KW-0812">Transmembrane</keyword>
<keyword id="KW-1133">Transmembrane helix</keyword>
<keyword id="KW-0813">Transport</keyword>
<feature type="chain" id="PRO_0000277291" description="ATP synthase subunit b, chloroplastic">
    <location>
        <begin position="1"/>
        <end position="183"/>
    </location>
</feature>
<feature type="transmembrane region" description="Helical" evidence="1">
    <location>
        <begin position="28"/>
        <end position="48"/>
    </location>
</feature>
<reference key="1">
    <citation type="submission" date="2003-11" db="EMBL/GenBank/DDBJ databases">
        <title>Whole genome sequence of Porphyra yezoensis chloroplast.</title>
        <authorList>
            <person name="Kunimoto M."/>
            <person name="Morishima K."/>
            <person name="Yoshikawa M."/>
            <person name="Fukuda S."/>
            <person name="Kobayashi T."/>
            <person name="Kobayashi M."/>
            <person name="Okazaki T."/>
            <person name="Ohara I."/>
            <person name="Nakayama I."/>
        </authorList>
    </citation>
    <scope>NUCLEOTIDE SEQUENCE [LARGE SCALE GENOMIC DNA]</scope>
    <source>
        <strain>U-51</strain>
    </source>
</reference>